<dbReference type="EC" id="2.3.1.180" evidence="1"/>
<dbReference type="EMBL" id="AL596171">
    <property type="protein sequence ID" value="CAC97533.1"/>
    <property type="molecule type" value="Genomic_DNA"/>
</dbReference>
<dbReference type="PIR" id="AE1720">
    <property type="entry name" value="AE1720"/>
</dbReference>
<dbReference type="RefSeq" id="WP_003769815.1">
    <property type="nucleotide sequence ID" value="NC_003212.1"/>
</dbReference>
<dbReference type="SMR" id="Q929H1"/>
<dbReference type="STRING" id="272626.gene:17566667"/>
<dbReference type="GeneID" id="93235650"/>
<dbReference type="KEGG" id="lin:lin2305"/>
<dbReference type="eggNOG" id="COG0332">
    <property type="taxonomic scope" value="Bacteria"/>
</dbReference>
<dbReference type="HOGENOM" id="CLU_039592_3_1_9"/>
<dbReference type="OrthoDB" id="9815506at2"/>
<dbReference type="UniPathway" id="UPA00094"/>
<dbReference type="Proteomes" id="UP000002513">
    <property type="component" value="Chromosome"/>
</dbReference>
<dbReference type="GO" id="GO:0005737">
    <property type="term" value="C:cytoplasm"/>
    <property type="evidence" value="ECO:0007669"/>
    <property type="project" value="UniProtKB-SubCell"/>
</dbReference>
<dbReference type="GO" id="GO:0004315">
    <property type="term" value="F:3-oxoacyl-[acyl-carrier-protein] synthase activity"/>
    <property type="evidence" value="ECO:0007669"/>
    <property type="project" value="InterPro"/>
</dbReference>
<dbReference type="GO" id="GO:0033818">
    <property type="term" value="F:beta-ketoacyl-acyl-carrier-protein synthase III activity"/>
    <property type="evidence" value="ECO:0007669"/>
    <property type="project" value="UniProtKB-UniRule"/>
</dbReference>
<dbReference type="GO" id="GO:0006633">
    <property type="term" value="P:fatty acid biosynthetic process"/>
    <property type="evidence" value="ECO:0007669"/>
    <property type="project" value="UniProtKB-UniRule"/>
</dbReference>
<dbReference type="CDD" id="cd00830">
    <property type="entry name" value="KAS_III"/>
    <property type="match status" value="1"/>
</dbReference>
<dbReference type="FunFam" id="3.40.47.10:FF:000004">
    <property type="entry name" value="3-oxoacyl-[acyl-carrier-protein] synthase 3"/>
    <property type="match status" value="1"/>
</dbReference>
<dbReference type="Gene3D" id="3.40.47.10">
    <property type="match status" value="1"/>
</dbReference>
<dbReference type="HAMAP" id="MF_01815">
    <property type="entry name" value="FabH"/>
    <property type="match status" value="1"/>
</dbReference>
<dbReference type="InterPro" id="IPR013747">
    <property type="entry name" value="ACP_syn_III_C"/>
</dbReference>
<dbReference type="InterPro" id="IPR013751">
    <property type="entry name" value="ACP_syn_III_N"/>
</dbReference>
<dbReference type="InterPro" id="IPR004655">
    <property type="entry name" value="FabH"/>
</dbReference>
<dbReference type="InterPro" id="IPR016039">
    <property type="entry name" value="Thiolase-like"/>
</dbReference>
<dbReference type="NCBIfam" id="TIGR00747">
    <property type="entry name" value="fabH"/>
    <property type="match status" value="1"/>
</dbReference>
<dbReference type="NCBIfam" id="NF006829">
    <property type="entry name" value="PRK09352.1"/>
    <property type="match status" value="1"/>
</dbReference>
<dbReference type="PANTHER" id="PTHR43091">
    <property type="entry name" value="3-OXOACYL-[ACYL-CARRIER-PROTEIN] SYNTHASE"/>
    <property type="match status" value="1"/>
</dbReference>
<dbReference type="PANTHER" id="PTHR43091:SF1">
    <property type="entry name" value="BETA-KETOACYL-[ACYL-CARRIER-PROTEIN] SYNTHASE III, CHLOROPLASTIC"/>
    <property type="match status" value="1"/>
</dbReference>
<dbReference type="Pfam" id="PF08545">
    <property type="entry name" value="ACP_syn_III"/>
    <property type="match status" value="1"/>
</dbReference>
<dbReference type="Pfam" id="PF08541">
    <property type="entry name" value="ACP_syn_III_C"/>
    <property type="match status" value="1"/>
</dbReference>
<dbReference type="SUPFAM" id="SSF53901">
    <property type="entry name" value="Thiolase-like"/>
    <property type="match status" value="1"/>
</dbReference>
<accession>Q929H1</accession>
<keyword id="KW-0012">Acyltransferase</keyword>
<keyword id="KW-0963">Cytoplasm</keyword>
<keyword id="KW-0275">Fatty acid biosynthesis</keyword>
<keyword id="KW-0276">Fatty acid metabolism</keyword>
<keyword id="KW-0444">Lipid biosynthesis</keyword>
<keyword id="KW-0443">Lipid metabolism</keyword>
<keyword id="KW-0511">Multifunctional enzyme</keyword>
<keyword id="KW-0808">Transferase</keyword>
<name>FABH_LISIN</name>
<protein>
    <recommendedName>
        <fullName evidence="1">Beta-ketoacyl-[acyl-carrier-protein] synthase III</fullName>
        <shortName evidence="1">Beta-ketoacyl-ACP synthase III</shortName>
        <shortName evidence="1">KAS III</shortName>
        <ecNumber evidence="1">2.3.1.180</ecNumber>
    </recommendedName>
    <alternativeName>
        <fullName evidence="1">3-oxoacyl-[acyl-carrier-protein] synthase 3</fullName>
    </alternativeName>
    <alternativeName>
        <fullName evidence="1">3-oxoacyl-[acyl-carrier-protein] synthase III</fullName>
    </alternativeName>
</protein>
<feature type="chain" id="PRO_0000110439" description="Beta-ketoacyl-[acyl-carrier-protein] synthase III">
    <location>
        <begin position="1"/>
        <end position="312"/>
    </location>
</feature>
<feature type="region of interest" description="ACP-binding" evidence="1">
    <location>
        <begin position="238"/>
        <end position="242"/>
    </location>
</feature>
<feature type="active site" evidence="1">
    <location>
        <position position="112"/>
    </location>
</feature>
<feature type="active site" evidence="1">
    <location>
        <position position="237"/>
    </location>
</feature>
<feature type="active site" evidence="1">
    <location>
        <position position="267"/>
    </location>
</feature>
<organism>
    <name type="scientific">Listeria innocua serovar 6a (strain ATCC BAA-680 / CLIP 11262)</name>
    <dbReference type="NCBI Taxonomy" id="272626"/>
    <lineage>
        <taxon>Bacteria</taxon>
        <taxon>Bacillati</taxon>
        <taxon>Bacillota</taxon>
        <taxon>Bacilli</taxon>
        <taxon>Bacillales</taxon>
        <taxon>Listeriaceae</taxon>
        <taxon>Listeria</taxon>
    </lineage>
</organism>
<gene>
    <name evidence="1" type="primary">fabH</name>
    <name type="ordered locus">lin2305</name>
</gene>
<sequence>MNAGILGVGKYVPEKILTNFDLEKMMETSDEWIRTRTGIEERRIARDDEYTHDLAYEAAKVAIENAGLTPDDIDLFIVATVTQEATFPSVANIIQDRLGAKNAAGMDVEAACAGFTFGVVTAAQFIKTGAYKNIVVVGADKLSKITNWDDRATAVLFGDGAGAVVMGPVSDDHGLLSFDLGSDGSGGKYLNLDENKKIYMNGREVFRFAVRQMGEASLRVLESAGLEKEDLDLLIPHQANIRIMEASRERLNLPEEKLMKTVHKYGNTSSSSIALALVDAVEEGRIKDNDNVLLVGFGGGLTWGALIIRWGK</sequence>
<comment type="function">
    <text evidence="1">Catalyzes the condensation reaction of fatty acid synthesis by the addition to an acyl acceptor of two carbons from malonyl-ACP. Catalyzes the first condensation reaction which initiates fatty acid synthesis and may therefore play a role in governing the total rate of fatty acid production. Possesses both acetoacetyl-ACP synthase and acetyl transacylase activities. Its substrate specificity determines the biosynthesis of branched-chain and/or straight-chain of fatty acids.</text>
</comment>
<comment type="catalytic activity">
    <reaction evidence="1">
        <text>malonyl-[ACP] + acetyl-CoA + H(+) = 3-oxobutanoyl-[ACP] + CO2 + CoA</text>
        <dbReference type="Rhea" id="RHEA:12080"/>
        <dbReference type="Rhea" id="RHEA-COMP:9623"/>
        <dbReference type="Rhea" id="RHEA-COMP:9625"/>
        <dbReference type="ChEBI" id="CHEBI:15378"/>
        <dbReference type="ChEBI" id="CHEBI:16526"/>
        <dbReference type="ChEBI" id="CHEBI:57287"/>
        <dbReference type="ChEBI" id="CHEBI:57288"/>
        <dbReference type="ChEBI" id="CHEBI:78449"/>
        <dbReference type="ChEBI" id="CHEBI:78450"/>
        <dbReference type="EC" id="2.3.1.180"/>
    </reaction>
</comment>
<comment type="pathway">
    <text evidence="1">Lipid metabolism; fatty acid biosynthesis.</text>
</comment>
<comment type="subunit">
    <text evidence="1">Homodimer.</text>
</comment>
<comment type="subcellular location">
    <subcellularLocation>
        <location evidence="1">Cytoplasm</location>
    </subcellularLocation>
</comment>
<comment type="domain">
    <text evidence="1">The last Arg residue of the ACP-binding site is essential for the weak association between ACP/AcpP and FabH.</text>
</comment>
<comment type="similarity">
    <text evidence="1">Belongs to the thiolase-like superfamily. FabH family.</text>
</comment>
<proteinExistence type="inferred from homology"/>
<evidence type="ECO:0000255" key="1">
    <source>
        <dbReference type="HAMAP-Rule" id="MF_01815"/>
    </source>
</evidence>
<reference key="1">
    <citation type="journal article" date="2001" name="Science">
        <title>Comparative genomics of Listeria species.</title>
        <authorList>
            <person name="Glaser P."/>
            <person name="Frangeul L."/>
            <person name="Buchrieser C."/>
            <person name="Rusniok C."/>
            <person name="Amend A."/>
            <person name="Baquero F."/>
            <person name="Berche P."/>
            <person name="Bloecker H."/>
            <person name="Brandt P."/>
            <person name="Chakraborty T."/>
            <person name="Charbit A."/>
            <person name="Chetouani F."/>
            <person name="Couve E."/>
            <person name="de Daruvar A."/>
            <person name="Dehoux P."/>
            <person name="Domann E."/>
            <person name="Dominguez-Bernal G."/>
            <person name="Duchaud E."/>
            <person name="Durant L."/>
            <person name="Dussurget O."/>
            <person name="Entian K.-D."/>
            <person name="Fsihi H."/>
            <person name="Garcia-del Portillo F."/>
            <person name="Garrido P."/>
            <person name="Gautier L."/>
            <person name="Goebel W."/>
            <person name="Gomez-Lopez N."/>
            <person name="Hain T."/>
            <person name="Hauf J."/>
            <person name="Jackson D."/>
            <person name="Jones L.-M."/>
            <person name="Kaerst U."/>
            <person name="Kreft J."/>
            <person name="Kuhn M."/>
            <person name="Kunst F."/>
            <person name="Kurapkat G."/>
            <person name="Madueno E."/>
            <person name="Maitournam A."/>
            <person name="Mata Vicente J."/>
            <person name="Ng E."/>
            <person name="Nedjari H."/>
            <person name="Nordsiek G."/>
            <person name="Novella S."/>
            <person name="de Pablos B."/>
            <person name="Perez-Diaz J.-C."/>
            <person name="Purcell R."/>
            <person name="Remmel B."/>
            <person name="Rose M."/>
            <person name="Schlueter T."/>
            <person name="Simoes N."/>
            <person name="Tierrez A."/>
            <person name="Vazquez-Boland J.-A."/>
            <person name="Voss H."/>
            <person name="Wehland J."/>
            <person name="Cossart P."/>
        </authorList>
    </citation>
    <scope>NUCLEOTIDE SEQUENCE [LARGE SCALE GENOMIC DNA]</scope>
    <source>
        <strain>ATCC BAA-680 / CLIP 11262</strain>
    </source>
</reference>